<comment type="function">
    <text evidence="4 5 6">Brassicaceae-specific phytocytokine (plant endogenous peptide released into the apoplast) perceived by MIK2 in a BAK1/SERK3 and SERK4 coreceptors-dependent manner, that modulates various physiological and antimicrobial processes including growth prevention and reactive oxygen species (ROS) response regulation (PubMed:31001913, PubMed:33514716, PubMed:34535661). Inhibits root growth and regulates root meristems (PubMed:31001913, PubMed:34535661). Prevents general growth and development (PubMed:31001913). Exhibits antibacterial effects against Pseudomonas syringae pv. tomato DC3000, Ralstonia solanacearum, Bacillus subtilis and Agrobacterium tumefaciens, thus being an antimicrobial peptide (AMP) (PubMed:31001913).</text>
</comment>
<comment type="subunit">
    <text evidence="1">Interacts with MIK2 (via extracellular leucine-rich repeat domain); this interaction triggers the formation of complex between MIK2 and the BAK1/SERK3 and SERK4 coreceptors, and subsequent BAK1 activation by phosphorylation.</text>
</comment>
<comment type="subcellular location">
    <subcellularLocation>
        <location evidence="4">Cell membrane</location>
    </subcellularLocation>
    <subcellularLocation>
        <location evidence="4">Secreted</location>
        <location evidence="4">Extracellular space</location>
        <location evidence="4">Apoplast</location>
    </subcellularLocation>
    <text evidence="4">The precursor of SCOOP14, PROSCOOP14, accumulates at the plasma membrane and is proteolytically cleaved to release the SCOOP14 in the apoplasm.</text>
</comment>
<comment type="tissue specificity">
    <text evidence="4 6">Mostly expressed in seedlings shoots and leaves, and, to a lower extent, in roots, stems, siliques, seeds and flowers.</text>
</comment>
<comment type="induction">
    <text evidence="4">Induced by cold, drought and salt stress, but repressed by pathogenic bacteria Pseudomonas syringae pv. tomato (Pst) DC3000, jasmonate (MeJA), ethylene (ET) and salicylic acid (SA), mainly in shoots.</text>
</comment>
<comment type="disruption phenotype">
    <text evidence="4">Slightly increased growth and fresh weight.</text>
</comment>
<comment type="similarity">
    <text evidence="10">Belongs to the serine rich endogenous peptide (SCOOP) phytocytokine family.</text>
</comment>
<proteinExistence type="evidence at transcript level"/>
<evidence type="ECO:0000250" key="1">
    <source>
        <dbReference type="UniProtKB" id="B3H7I1"/>
    </source>
</evidence>
<evidence type="ECO:0000255" key="2"/>
<evidence type="ECO:0000256" key="3">
    <source>
        <dbReference type="SAM" id="MobiDB-lite"/>
    </source>
</evidence>
<evidence type="ECO:0000269" key="4">
    <source>
    </source>
</evidence>
<evidence type="ECO:0000269" key="5">
    <source>
    </source>
</evidence>
<evidence type="ECO:0000269" key="6">
    <source>
    </source>
</evidence>
<evidence type="ECO:0000303" key="7">
    <source>
    </source>
</evidence>
<evidence type="ECO:0000303" key="8">
    <source>
    </source>
</evidence>
<evidence type="ECO:0000303" key="9">
    <source>
    </source>
</evidence>
<evidence type="ECO:0000305" key="10"/>
<evidence type="ECO:0000305" key="11">
    <source>
    </source>
</evidence>
<evidence type="ECO:0000312" key="12">
    <source>
        <dbReference type="Araport" id="AT1G22890"/>
    </source>
</evidence>
<evidence type="ECO:0000312" key="13">
    <source>
        <dbReference type="EMBL" id="AF000657"/>
    </source>
</evidence>
<dbReference type="EMBL" id="AF000657">
    <property type="status" value="NOT_ANNOTATED_CDS"/>
    <property type="molecule type" value="Genomic_DNA"/>
</dbReference>
<dbReference type="EMBL" id="CP002684">
    <property type="protein sequence ID" value="AEE30304.1"/>
    <property type="molecule type" value="Genomic_DNA"/>
</dbReference>
<dbReference type="EMBL" id="BT029388">
    <property type="protein sequence ID" value="ABK32202.1"/>
    <property type="molecule type" value="mRNA"/>
</dbReference>
<dbReference type="EMBL" id="AK317242">
    <property type="protein sequence ID" value="BAH19923.1"/>
    <property type="molecule type" value="mRNA"/>
</dbReference>
<dbReference type="RefSeq" id="NP_173702.1">
    <property type="nucleotide sequence ID" value="NM_102136.3"/>
</dbReference>
<dbReference type="FunCoup" id="A0JQ18">
    <property type="interactions" value="2"/>
</dbReference>
<dbReference type="PaxDb" id="3702-AT1G22890.1"/>
<dbReference type="EnsemblPlants" id="AT1G22890.1">
    <property type="protein sequence ID" value="AT1G22890.1"/>
    <property type="gene ID" value="AT1G22890"/>
</dbReference>
<dbReference type="GeneID" id="838896"/>
<dbReference type="Gramene" id="AT1G22890.1">
    <property type="protein sequence ID" value="AT1G22890.1"/>
    <property type="gene ID" value="AT1G22890"/>
</dbReference>
<dbReference type="KEGG" id="ath:AT1G22890"/>
<dbReference type="Araport" id="AT1G22890"/>
<dbReference type="TAIR" id="AT1G22890">
    <property type="gene designation" value="STMP2"/>
</dbReference>
<dbReference type="eggNOG" id="KOG1396">
    <property type="taxonomic scope" value="Eukaryota"/>
</dbReference>
<dbReference type="HOGENOM" id="CLU_200719_0_0_1"/>
<dbReference type="InParanoid" id="A0JQ18"/>
<dbReference type="OMA" id="EAKHHQR"/>
<dbReference type="PRO" id="PR:A0JQ18"/>
<dbReference type="Proteomes" id="UP000006548">
    <property type="component" value="Chromosome 1"/>
</dbReference>
<dbReference type="ExpressionAtlas" id="A0JQ18">
    <property type="expression patterns" value="baseline and differential"/>
</dbReference>
<dbReference type="GO" id="GO:0048046">
    <property type="term" value="C:apoplast"/>
    <property type="evidence" value="ECO:0000314"/>
    <property type="project" value="UniProtKB"/>
</dbReference>
<dbReference type="GO" id="GO:0005886">
    <property type="term" value="C:plasma membrane"/>
    <property type="evidence" value="ECO:0000314"/>
    <property type="project" value="TAIR"/>
</dbReference>
<dbReference type="GO" id="GO:0030275">
    <property type="term" value="F:LRR domain binding"/>
    <property type="evidence" value="ECO:0000250"/>
    <property type="project" value="UniProtKB"/>
</dbReference>
<dbReference type="GO" id="GO:0033612">
    <property type="term" value="F:receptor serine/threonine kinase binding"/>
    <property type="evidence" value="ECO:0000250"/>
    <property type="project" value="UniProtKB"/>
</dbReference>
<dbReference type="GO" id="GO:0006952">
    <property type="term" value="P:defense response"/>
    <property type="evidence" value="ECO:0000314"/>
    <property type="project" value="TAIR"/>
</dbReference>
<dbReference type="GO" id="GO:0042742">
    <property type="term" value="P:defense response to bacterium"/>
    <property type="evidence" value="ECO:0000314"/>
    <property type="project" value="UniProtKB"/>
</dbReference>
<dbReference type="GO" id="GO:0009617">
    <property type="term" value="P:response to bacterium"/>
    <property type="evidence" value="ECO:0000270"/>
    <property type="project" value="UniProtKB"/>
</dbReference>
<dbReference type="GO" id="GO:0009409">
    <property type="term" value="P:response to cold"/>
    <property type="evidence" value="ECO:0000270"/>
    <property type="project" value="UniProtKB"/>
</dbReference>
<dbReference type="GO" id="GO:0009723">
    <property type="term" value="P:response to ethylene"/>
    <property type="evidence" value="ECO:0000270"/>
    <property type="project" value="UniProtKB"/>
</dbReference>
<dbReference type="GO" id="GO:0009753">
    <property type="term" value="P:response to jasmonic acid"/>
    <property type="evidence" value="ECO:0000270"/>
    <property type="project" value="UniProtKB"/>
</dbReference>
<dbReference type="GO" id="GO:0009751">
    <property type="term" value="P:response to salicylic acid"/>
    <property type="evidence" value="ECO:0000270"/>
    <property type="project" value="UniProtKB"/>
</dbReference>
<dbReference type="GO" id="GO:0009651">
    <property type="term" value="P:response to salt stress"/>
    <property type="evidence" value="ECO:0000270"/>
    <property type="project" value="UniProtKB"/>
</dbReference>
<dbReference type="GO" id="GO:0009414">
    <property type="term" value="P:response to water deprivation"/>
    <property type="evidence" value="ECO:0000270"/>
    <property type="project" value="UniProtKB"/>
</dbReference>
<gene>
    <name evidence="8 9" type="primary">PROSCOOP14</name>
    <name evidence="8 9" type="synonym">SCOOP14</name>
    <name evidence="7" type="synonym">STMP2</name>
    <name evidence="12" type="ordered locus">At1g22890</name>
    <name evidence="13" type="ORF">F19G10.22</name>
</gene>
<accession>A0JQ18</accession>
<keyword id="KW-0052">Apoplast</keyword>
<keyword id="KW-1003">Cell membrane</keyword>
<keyword id="KW-0165">Cleavage on pair of basic residues</keyword>
<keyword id="KW-0472">Membrane</keyword>
<keyword id="KW-1185">Reference proteome</keyword>
<keyword id="KW-0964">Secreted</keyword>
<keyword id="KW-0732">Signal</keyword>
<feature type="signal peptide" evidence="2">
    <location>
        <begin position="1"/>
        <end position="31"/>
    </location>
</feature>
<feature type="propeptide" id="PRO_0000457240" description="Removed in mature form" evidence="1">
    <location>
        <begin position="32"/>
        <end status="unknown"/>
    </location>
</feature>
<feature type="peptide" id="PRO_0000457241" description="Serine rich endogenous peptide 14" evidence="1">
    <location>
        <begin status="unknown"/>
        <end position="73"/>
    </location>
</feature>
<feature type="region of interest" description="Disordered" evidence="3">
    <location>
        <begin position="44"/>
        <end position="73"/>
    </location>
</feature>
<feature type="short sequence motif" description="SCOOP motif" evidence="11">
    <location>
        <begin position="59"/>
        <end position="73"/>
    </location>
</feature>
<feature type="short sequence motif" description="SxS motif essential for MIK2 binding" evidence="1">
    <location>
        <begin position="65"/>
        <end position="67"/>
    </location>
</feature>
<feature type="compositionally biased region" description="Polar residues" evidence="3">
    <location>
        <begin position="64"/>
        <end position="73"/>
    </location>
</feature>
<sequence length="73" mass="7777">MAAKTSNLVALLLSLFLLLLSISSQVGLGEAKRNLRNNLRLDCVSHPSPPPPHRSMAPPIFVPPSTSHKGQGP</sequence>
<protein>
    <recommendedName>
        <fullName evidence="8 9">Serine rich endogenous peptide 14</fullName>
        <shortName evidence="8 9">AtSCOOP14</shortName>
    </recommendedName>
    <alternativeName>
        <fullName evidence="8 9">Phytocytokine SCOOP14</fullName>
    </alternativeName>
    <alternativeName>
        <fullName evidence="8 9">Precursor of serine rich endogenous peptide phytocytokine 14</fullName>
    </alternativeName>
    <alternativeName>
        <fullName evidence="7">Secreted transmembrane peptide 2</fullName>
    </alternativeName>
</protein>
<organism>
    <name type="scientific">Arabidopsis thaliana</name>
    <name type="common">Mouse-ear cress</name>
    <dbReference type="NCBI Taxonomy" id="3702"/>
    <lineage>
        <taxon>Eukaryota</taxon>
        <taxon>Viridiplantae</taxon>
        <taxon>Streptophyta</taxon>
        <taxon>Embryophyta</taxon>
        <taxon>Tracheophyta</taxon>
        <taxon>Spermatophyta</taxon>
        <taxon>Magnoliopsida</taxon>
        <taxon>eudicotyledons</taxon>
        <taxon>Gunneridae</taxon>
        <taxon>Pentapetalae</taxon>
        <taxon>rosids</taxon>
        <taxon>malvids</taxon>
        <taxon>Brassicales</taxon>
        <taxon>Brassicaceae</taxon>
        <taxon>Camelineae</taxon>
        <taxon>Arabidopsis</taxon>
    </lineage>
</organism>
<reference key="1">
    <citation type="journal article" date="2000" name="Nature">
        <title>Sequence and analysis of chromosome 1 of the plant Arabidopsis thaliana.</title>
        <authorList>
            <person name="Theologis A."/>
            <person name="Ecker J.R."/>
            <person name="Palm C.J."/>
            <person name="Federspiel N.A."/>
            <person name="Kaul S."/>
            <person name="White O."/>
            <person name="Alonso J."/>
            <person name="Altafi H."/>
            <person name="Araujo R."/>
            <person name="Bowman C.L."/>
            <person name="Brooks S.Y."/>
            <person name="Buehler E."/>
            <person name="Chan A."/>
            <person name="Chao Q."/>
            <person name="Chen H."/>
            <person name="Cheuk R.F."/>
            <person name="Chin C.W."/>
            <person name="Chung M.K."/>
            <person name="Conn L."/>
            <person name="Conway A.B."/>
            <person name="Conway A.R."/>
            <person name="Creasy T.H."/>
            <person name="Dewar K."/>
            <person name="Dunn P."/>
            <person name="Etgu P."/>
            <person name="Feldblyum T.V."/>
            <person name="Feng J.-D."/>
            <person name="Fong B."/>
            <person name="Fujii C.Y."/>
            <person name="Gill J.E."/>
            <person name="Goldsmith A.D."/>
            <person name="Haas B."/>
            <person name="Hansen N.F."/>
            <person name="Hughes B."/>
            <person name="Huizar L."/>
            <person name="Hunter J.L."/>
            <person name="Jenkins J."/>
            <person name="Johnson-Hopson C."/>
            <person name="Khan S."/>
            <person name="Khaykin E."/>
            <person name="Kim C.J."/>
            <person name="Koo H.L."/>
            <person name="Kremenetskaia I."/>
            <person name="Kurtz D.B."/>
            <person name="Kwan A."/>
            <person name="Lam B."/>
            <person name="Langin-Hooper S."/>
            <person name="Lee A."/>
            <person name="Lee J.M."/>
            <person name="Lenz C.A."/>
            <person name="Li J.H."/>
            <person name="Li Y.-P."/>
            <person name="Lin X."/>
            <person name="Liu S.X."/>
            <person name="Liu Z.A."/>
            <person name="Luros J.S."/>
            <person name="Maiti R."/>
            <person name="Marziali A."/>
            <person name="Militscher J."/>
            <person name="Miranda M."/>
            <person name="Nguyen M."/>
            <person name="Nierman W.C."/>
            <person name="Osborne B.I."/>
            <person name="Pai G."/>
            <person name="Peterson J."/>
            <person name="Pham P.K."/>
            <person name="Rizzo M."/>
            <person name="Rooney T."/>
            <person name="Rowley D."/>
            <person name="Sakano H."/>
            <person name="Salzberg S.L."/>
            <person name="Schwartz J.R."/>
            <person name="Shinn P."/>
            <person name="Southwick A.M."/>
            <person name="Sun H."/>
            <person name="Tallon L.J."/>
            <person name="Tambunga G."/>
            <person name="Toriumi M.J."/>
            <person name="Town C.D."/>
            <person name="Utterback T."/>
            <person name="Van Aken S."/>
            <person name="Vaysberg M."/>
            <person name="Vysotskaia V.S."/>
            <person name="Walker M."/>
            <person name="Wu D."/>
            <person name="Yu G."/>
            <person name="Fraser C.M."/>
            <person name="Venter J.C."/>
            <person name="Davis R.W."/>
        </authorList>
    </citation>
    <scope>NUCLEOTIDE SEQUENCE [LARGE SCALE GENOMIC DNA]</scope>
    <source>
        <strain>cv. Columbia</strain>
    </source>
</reference>
<reference key="2">
    <citation type="journal article" date="2017" name="Plant J.">
        <title>Araport11: a complete reannotation of the Arabidopsis thaliana reference genome.</title>
        <authorList>
            <person name="Cheng C.Y."/>
            <person name="Krishnakumar V."/>
            <person name="Chan A.P."/>
            <person name="Thibaud-Nissen F."/>
            <person name="Schobel S."/>
            <person name="Town C.D."/>
        </authorList>
    </citation>
    <scope>GENOME REANNOTATION</scope>
    <source>
        <strain>cv. Columbia</strain>
    </source>
</reference>
<reference key="3">
    <citation type="submission" date="2006-11" db="EMBL/GenBank/DDBJ databases">
        <title>Arabidopsis ORF clones.</title>
        <authorList>
            <person name="Bautista V.R."/>
            <person name="Kim C.J."/>
            <person name="Chen H."/>
            <person name="Quinitio C."/>
            <person name="Ecker J.R."/>
        </authorList>
    </citation>
    <scope>NUCLEOTIDE SEQUENCE [LARGE SCALE MRNA]</scope>
    <source>
        <strain>cv. Columbia</strain>
    </source>
</reference>
<reference key="4">
    <citation type="journal article" date="2009" name="DNA Res.">
        <title>Analysis of multiple occurrences of alternative splicing events in Arabidopsis thaliana using novel sequenced full-length cDNAs.</title>
        <authorList>
            <person name="Iida K."/>
            <person name="Fukami-Kobayashi K."/>
            <person name="Toyoda A."/>
            <person name="Sakaki Y."/>
            <person name="Kobayashi M."/>
            <person name="Seki M."/>
            <person name="Shinozaki K."/>
        </authorList>
    </citation>
    <scope>NUCLEOTIDE SEQUENCE [LARGE SCALE MRNA]</scope>
    <source>
        <strain>cv. Columbia</strain>
        <tissue>Rosette leaf</tissue>
    </source>
</reference>
<reference key="5">
    <citation type="journal article" date="2019" name="J. Exp. Bot.">
        <title>The SCOOP12 peptide regulates defense response and root elongation in Arabidopsis thaliana.</title>
        <authorList>
            <person name="Gully K."/>
            <person name="Pelletier S."/>
            <person name="Guillou M.-C."/>
            <person name="Ferrand M."/>
            <person name="Aligon S."/>
            <person name="Pokotylo I."/>
            <person name="Perrin A."/>
            <person name="Vergne E."/>
            <person name="Fagard M."/>
            <person name="Ruelland E."/>
            <person name="Grappin P."/>
            <person name="Bucher E."/>
            <person name="Renou J.-P."/>
            <person name="Aubourg S."/>
        </authorList>
    </citation>
    <scope>GENE FAMILY</scope>
    <source>
        <strain>cv. Columbia</strain>
        <strain>cv. Wassilewskija</strain>
    </source>
</reference>
<reference key="6">
    <citation type="journal article" date="2020" name="J. Integr. Plant Biol.">
        <title>The Brassicaceae-specific secreted peptides, STMPs, function in plant growth and pathogen defense.</title>
        <authorList>
            <person name="Yu Z."/>
            <person name="Xu Y."/>
            <person name="Zhu L."/>
            <person name="Zhang L."/>
            <person name="Liu L."/>
            <person name="Zhang D."/>
            <person name="Li D."/>
            <person name="Wu C."/>
            <person name="Huang J."/>
            <person name="Yang G."/>
            <person name="Yan K."/>
            <person name="Zhang S."/>
            <person name="Zheng C."/>
        </authorList>
    </citation>
    <scope>FUNCTION</scope>
    <scope>DISRUPTION PHENOTYPE</scope>
    <scope>SUBCELLULAR LOCATION</scope>
    <scope>TISSUE SPECIFICITY</scope>
    <scope>INDUCTION BY BIOTIC AND ABIOTIC STRESSES</scope>
    <scope>GENE FAMILY</scope>
    <scope>NOMENCLATURE</scope>
    <source>
        <strain>cv. Columbia</strain>
    </source>
</reference>
<reference key="7">
    <citation type="journal article" date="2021" name="Nat. Commun.">
        <title>Perception of a divergent family of phytocytokines by the Arabidopsis receptor kinase MIK2.</title>
        <authorList>
            <person name="Rhodes J."/>
            <person name="Yang H."/>
            <person name="Moussu S."/>
            <person name="Boutrot F."/>
            <person name="Santiago J."/>
            <person name="Zipfel C."/>
        </authorList>
    </citation>
    <scope>FUNCTION</scope>
    <scope>GENE FAMILY</scope>
    <source>
        <strain>cv. Columbia</strain>
        <strain>cv. Wassilewskija-2</strain>
    </source>
</reference>
<reference key="8">
    <citation type="journal article" date="2021" name="Nat. Commun.">
        <title>The Arabidopsis MIK2 receptor elicits immunity by sensing a conserved signature from phytocytokines and microbes.</title>
        <authorList>
            <person name="Hou S."/>
            <person name="Liu D."/>
            <person name="Huang S."/>
            <person name="Luo D."/>
            <person name="Liu Z."/>
            <person name="Xiang Q."/>
            <person name="Wang P."/>
            <person name="Mu R."/>
            <person name="Han Z."/>
            <person name="Chen S."/>
            <person name="Chai J."/>
            <person name="Shan L."/>
            <person name="He P."/>
        </authorList>
    </citation>
    <scope>FUNCTION</scope>
    <scope>TISSUE SPECIFICITY</scope>
    <scope>GENE FAMILY</scope>
    <scope>NOMENCLATURE</scope>
    <source>
        <strain>cv. Columbia</strain>
    </source>
</reference>
<name>SOP14_ARATH</name>